<name>ITB1_CAMBA</name>
<organism>
    <name type="scientific">Camelus bactrianus</name>
    <name type="common">Bactrian camel</name>
    <dbReference type="NCBI Taxonomy" id="9837"/>
    <lineage>
        <taxon>Eukaryota</taxon>
        <taxon>Metazoa</taxon>
        <taxon>Chordata</taxon>
        <taxon>Craniata</taxon>
        <taxon>Vertebrata</taxon>
        <taxon>Euteleostomi</taxon>
        <taxon>Mammalia</taxon>
        <taxon>Eutheria</taxon>
        <taxon>Laurasiatheria</taxon>
        <taxon>Artiodactyla</taxon>
        <taxon>Tylopoda</taxon>
        <taxon>Camelidae</taxon>
        <taxon>Camelus</taxon>
    </lineage>
</organism>
<gene>
    <name evidence="3" type="primary">ITGB1</name>
</gene>
<sequence length="798" mass="88111">MNLQLIFWIGLISSVCCVFGQADEDRCLKANAKSCGECIQAGPNCGWCTNSTFLQEGMPTSARCDDLEALKKKGCHPNDTENPRGSKDIKKNKNVTNRSKGTAEKLQPEDITQIQPQQLVLQLRSGEPQTFTLKFKRAEDYPIDLYYLMDLSYSMKDDLENVKSLGTDLMNEMRRITSDFRIGFGSFVEKTVMPYISTTPAKLRNPCTNEQNCTSPFSYKNVLSLTDKGEVFNELVGKQRISGNLDSPEGGFDAIMQVAVCGSLIGWRNVTRLLVFSTDAGFHFAGDGKLGGIVLPNDGQCHLKNDVYTMSHYYDYPSIAHLVQKLSENNIQTIFAVTEEFQPVYKELKNLIPKSAVGTLSANSSNVIQLIIDAYNSLSSEVILENSKLPEGVTINYKSYCKNGVNGTGENGRKCSNISIGDEVQFEISITANKCPDKNSETIKIKPLGFTEEVEIILQFICECECQGEGIPGSPKCHDGNGTFECGACRCNEGRVGRHCECSTDEVNSEDMDAYCRKENSSEICSNNGECVCGQCVCRKRDNTNEIYSGKFCECDNFNCDRSNGLICGGNGVCKCRVCECNPNYTGSACDCSLDTTSCMAVNGQICNGRGVCECGACKCTDPKFQGPTCEMCQTCLGVCAEHKECVQCRAFNKGEKKDTCAQECSHFNITKVENRDKLPQPGQVDPLSHCKEKDVDDCWFYFTYSVNGNNEATVHVVETPECPTGPDIIPIVAGVVAGIVLIGLALLLIWKLLMIIHDRREFAKFEKERMNAKWDTGENPIYKSAVTTVVNPKYEGK</sequence>
<reference evidence="9" key="1">
    <citation type="submission" date="2007-05" db="EMBL/GenBank/DDBJ databases">
        <title>Molecular cloning of cDNA encoding Bactrian camel beta-1 subunit for FMDV receptor.</title>
        <authorList>
            <person name="Du J."/>
            <person name="Chang H."/>
            <person name="Gao S."/>
            <person name="Cong G."/>
            <person name="Shao J."/>
            <person name="Lin T."/>
            <person name="Cai X."/>
            <person name="Xie Q."/>
        </authorList>
    </citation>
    <scope>NUCLEOTIDE SEQUENCE [MRNA]</scope>
    <source>
        <tissue evidence="9">Lung</tissue>
    </source>
</reference>
<comment type="function">
    <text evidence="3 4 5">Integrins alpha-1/beta-1, alpha-2/beta-1, alpha-10/beta-1 and alpha-11/beta-1 are receptors for collagen. Integrins alpha-1/beta-1 and alpha-2/beta-2 recognize the proline-hydroxylated sequence G-F-P-G-E-R in collagen. Integrins alpha-2/beta-1, alpha-3/beta-1, alpha-4/beta-1, alpha-5/beta-1, alpha-8/beta-1, alpha-10/beta-1, alpha-11/beta-1 and alpha-V/beta-1 are receptors for fibronectin. Alpha-4/beta-1 recognizes one or more domains within the alternatively spliced CS-1 and CS-5 regions of fibronectin. Integrin alpha-5/beta-1 is a receptor for fibrinogen. Integrin alpha-1/beta-1, alpha-2/beta-1, alpha-6/beta-1 and alpha-7/beta-1 are receptors for lamimin. Integrin alpha-6/beta-1 (ITGA6:ITGB1) is present in oocytes and is involved in sperm-egg fusion. Integrin alpha-4/beta-1 is a receptor for VCAM1 and recognizes the sequence Q-I-D-S in VCAM1. Integrin alpha-9/beta-1 is a receptor for VCAM1, cytotactin and osteopontin. It recognizes the sequence A-E-I-D-G-I-E-L in cytotactin. Integrin alpha-3/beta-1 is a receptor for epiligrin, thrombospondin and CSPG4. Integrin alpha-3/beta-1 provides a docking site for FAP (seprase) at invadopodia plasma membranes in a collagen-dependent manner and hence may participate in the adhesion, formation of invadopodia and matrix degradation processes, promoting cell invasion. Alpha-3/beta-1 may mediate with LGALS3 the stimulation by CSPG4 of endothelial cells migration. Integrin alpha-V/beta-1 is a receptor for vitronectin. Beta-1 integrins recognize the sequence R-G-D in a wide array of ligands. When associated with alpha-7/beta-1 integrin, regulates cell adhesion and laminin matrix deposition. Involved in promoting endothelial cell motility and angiogenesis. Involved in osteoblast compaction through the fibronectin fibrillogenesis cell-mediated matrix assembly process and the formation of mineralized bone nodules. May be involved in up-regulation of the activity of kinases such as PKC via binding to KRT1. Together with KRT1 and RACK1, serves as a platform for SRC activation or inactivation. Plays a mechanistic adhesive role during telophase, required for the successful completion of cytokinesis (By similarity). ITGA4:ITGB1 binds to fractalkine (CX3CL1) and may act as its coreceptor in CX3CR1-dependent fractalkine signaling. ITGA4:ITGB1 and ITGA5:ITGB1 bind to PLA2G2A via a site (site 2) which is distinct from the classical ligand-binding site (site 1) and this induces integrin conformational changes and enhanced ligand binding to site 1. ITGA5:ITGB1 acts as a receptor for fibrillin-1 (FBN1) and mediates R-G-D-dependent cell adhesion to FBN1. ITGA5:ITGB1 is a receptor for IL1B and binding is essential for IL1B signaling (By similarity). ITGA5:ITGB3 is a receptor for soluble CD40LG and is required for CD40/CD40LG signaling (By similarity). Plays an important role in myoblast differentiation and fusion during skeletal myogenesis (By similarity). ITGA9:ITGB1 may play a crucial role in SVEP1/polydom-mediated myoblast cell adhesion (By similarity). Integrins ITGA9:ITGB1 and ITGA4:ITGB1 repress PRKCA-mediated L-type voltage-gated channel Ca(2+) influx and ROCK-mediated calcium sensitivity in vascular smooth muscle cells via their interaction with SVEP1, thereby inhibit vasocontraction (By similarity).</text>
</comment>
<comment type="subunit">
    <text evidence="3 4 5">Interacts with seprase FAP (seprase); the interaction occurs at the cell surface of invadopodia membrane in a collagen-dependent manner (By similarity). Heterodimer of an alpha and a beta subunit. Beta-1 associates with either alpha-1, alpha-2, alpha-3, alpha-4, alpha-5, alpha-6, alpha-7, alpha-8, alpha-9, alpha-10, alpha-11 or alpha-V. ITGA6:ITGB1 is found in a complex with CD9; interaction takes place in oocytes and is involved in sperm-egg fusion. Binds LGALS3BP and NMRK2, when associated with alpha-7, but not with alpha-5. Interacts with FLNA, FLNB, FLNC and RANBP9. Interacts with KRT1 in the presence of RACK1 and SRC. Interacts with JAML; integrin alpha-4/beta-1 may regulate leukocyte to endothelial cells adhesion by controlling JAML homodimerization. Interacts with RAB21. Interacts (via the cytoplasmic region) with RAB25 (via the hypervariable C-terminal region). Interacts with MYO10. Interacts with ITGB1BP1 (via C-terminal region); the interaction is a prerequisite for focal adhesion disassembly. Interacts with TLN1; the interaction is prevented by competitive binding of ITGB1BP1. Interacts with ACAP1; required for ITGB1 recycling. Interacts with ASAP3. Interacts with FERMT2; the interaction is inhibited in presence of ITGB1BP1. Interacts with DAB2. Interacts with FGR and HCK. Interacts with alpha-7A and alpha-7B in adult skeletal muscle. Interacts with alpha-7B in cardiomyocytes of adult heart. Interacts with EMP2; the interaction may be direct or indirect and ITGB1 has a heterodimer form (By similarity). ITGA5:ITGB1 interacts with CCN3 (By similarity). ITGA4:ITGB1 is found in a ternary complex with CX3CR1 and CX3CL1 (By similarity). ITGA5:ITGB1 interacts with FBN1 (By similarity). ITGA5:ITGB1 acts as a receptor for fibronectin FN1 and mediates R-G-D-dependent cell adhesion to FN1 (By similarity). ITGA5:ITGB1 interacts with IL1B. Interacts with MDK. ITGA4:ITGB1 interacts with MDK; this interaction mediates MDK-induced osteoblast cells migration through PXN phosphorylation. ITGA6:ITGB1 interacts with MDK; this interaction mediates MDK-induced neurite-outgrowth (By similarity). ITGA5:ITGB1 interacts with ACE2 (By similarity). Interacts with TMEM182 and LAMB1 (By similarity). Interacts with tensin TNS3; TNS3 also interacts with PEAK1, thus acting as an adapter molecule to bridge the association of PEAK1 with ITGB1 (By similarity). Interacts with tensin TNS4; the interaction displaces tensin TNS3 from the ITGB1 cytoplasmic tail and promotes ITGB1 stability (By similarity). Integrin ITGA9:ITGB1 interacts with SPP1/OPN (via N-terminus) (By similarity). Integrin ITGA9:ITGB1 interacts with TNC/TNFN3 (via the 3rd Fibronectin type-III domain) (By similarity). Integrins ITGA4:ITGB1 and ITGA9:ITGB1 interact with SVEP1 (via Sushi domain 21); thereby inhibit Ca(2+) intracellular signaling and as a result repress vasocontraction (By similarity). ITGA4:ITGB1 and ITGA5:ITGB1 interacts with SELP (By similarity). Interacts with CD248 (By similarity). ITGA5:ITGB1 interacts with IGFBP1 (By similarity). ITGA4:ITGB1 interacts with BCAM (By similarity). Interacts with ADGRG6 (By similarity).</text>
</comment>
<comment type="subcellular location">
    <subcellularLocation>
        <location evidence="3">Cell membrane</location>
        <topology evidence="6">Single-pass type I membrane protein</topology>
    </subcellularLocation>
    <subcellularLocation>
        <location evidence="3">Cell projection</location>
        <location evidence="3">Invadopodium membrane</location>
        <topology evidence="6">Single-pass type I membrane protein</topology>
    </subcellularLocation>
    <subcellularLocation>
        <location evidence="3">Cell projection</location>
        <location evidence="3">Ruffle membrane</location>
        <topology evidence="6">Single-pass type I membrane protein</topology>
    </subcellularLocation>
    <subcellularLocation>
        <location evidence="3">Recycling endosome</location>
    </subcellularLocation>
    <subcellularLocation>
        <location evidence="3">Melanosome</location>
    </subcellularLocation>
    <subcellularLocation>
        <location evidence="3">Cell junction</location>
        <location evidence="3">Focal adhesion</location>
    </subcellularLocation>
    <subcellularLocation>
        <location evidence="3">Cell projection</location>
        <location evidence="3">Lamellipodium</location>
    </subcellularLocation>
    <subcellularLocation>
        <location evidence="3">Cell projection</location>
        <location evidence="3">Ruffle</location>
    </subcellularLocation>
    <text evidence="3">Enriched preferentially at invadopodia, cell membrane protrusions that correspond to sites of cell invasion, in a collagen-dependent manner. Localized at plasma and ruffle membranes in a collagen-independent manner. Colocalizes with ITGB1BP1 and metastatic suppressor protein NME2 at the edge or peripheral ruffles and lamellipodia during the early stages of cell spreading on fibronectin or collagen. Translocates from peripheral focal adhesions to fibrillar adhesions in an ITGB1BP1-dependent manner.</text>
</comment>
<comment type="domain">
    <text evidence="3">The VWFA domain (or beta I domain) contains three cation-binding sites: the ligand-associated metal ion-binding site (LIMBS or SyMBS), the metal ion-dependent adhesion site (MIDAS), and the adjacent MIDAS site (ADMIDAS). This domain is also part of the ligand-binding site.</text>
</comment>
<comment type="similarity">
    <text evidence="6">Belongs to the integrin beta chain family.</text>
</comment>
<feature type="signal peptide" evidence="6">
    <location>
        <begin position="1"/>
        <end position="20"/>
    </location>
</feature>
<feature type="chain" id="PRO_0000355117" description="Integrin beta-1" evidence="6">
    <location>
        <begin position="21"/>
        <end position="798"/>
    </location>
</feature>
<feature type="topological domain" description="Extracellular" evidence="6">
    <location>
        <begin position="21"/>
        <end position="728"/>
    </location>
</feature>
<feature type="transmembrane region" description="Helical" evidence="6">
    <location>
        <begin position="729"/>
        <end position="749"/>
    </location>
</feature>
<feature type="topological domain" description="Cytoplasmic" evidence="6">
    <location>
        <begin position="750"/>
        <end position="798"/>
    </location>
</feature>
<feature type="domain" description="PSI" evidence="6">
    <location>
        <begin position="26"/>
        <end position="76"/>
    </location>
</feature>
<feature type="domain" description="VWFA" evidence="2">
    <location>
        <begin position="140"/>
        <end position="378"/>
    </location>
</feature>
<feature type="domain" description="I-EGF 1" evidence="7">
    <location>
        <begin position="466"/>
        <end position="501"/>
    </location>
</feature>
<feature type="domain" description="I-EGF 2" evidence="7">
    <location>
        <begin position="502"/>
        <end position="554"/>
    </location>
</feature>
<feature type="domain" description="I-EGF 3" evidence="7">
    <location>
        <begin position="555"/>
        <end position="591"/>
    </location>
</feature>
<feature type="domain" description="I-EGF 4" evidence="7">
    <location>
        <begin position="592"/>
        <end position="631"/>
    </location>
</feature>
<feature type="region of interest" description="Disordered" evidence="8">
    <location>
        <begin position="75"/>
        <end position="105"/>
    </location>
</feature>
<feature type="region of interest" description="CX3CL1-binding" evidence="3">
    <location>
        <begin position="207"/>
        <end position="213"/>
    </location>
</feature>
<feature type="region of interest" description="CX3CL1-binding" evidence="3">
    <location>
        <begin position="295"/>
        <end position="314"/>
    </location>
</feature>
<feature type="region of interest" description="Interaction with TMEM182" evidence="4">
    <location>
        <begin position="383"/>
        <end position="465"/>
    </location>
</feature>
<feature type="region of interest" description="Signal for sorting from recycling endosomes; interaction with ACAP1" evidence="1">
    <location>
        <begin position="762"/>
        <end position="767"/>
    </location>
</feature>
<feature type="region of interest" description="Interaction with ITGB1BP1" evidence="1">
    <location>
        <begin position="785"/>
        <end position="792"/>
    </location>
</feature>
<feature type="compositionally biased region" description="Basic and acidic residues" evidence="8">
    <location>
        <begin position="75"/>
        <end position="91"/>
    </location>
</feature>
<feature type="binding site" description="in MIDAS binding site" evidence="3">
    <location>
        <position position="152"/>
    </location>
    <ligand>
        <name>Mg(2+)</name>
        <dbReference type="ChEBI" id="CHEBI:18420"/>
    </ligand>
</feature>
<feature type="binding site" description="in ADMIDAS binding site" evidence="3">
    <location>
        <position position="154"/>
    </location>
    <ligand>
        <name>Ca(2+)</name>
        <dbReference type="ChEBI" id="CHEBI:29108"/>
        <label>1</label>
    </ligand>
</feature>
<feature type="binding site" description="in MIDAS binding site" evidence="3">
    <location>
        <position position="154"/>
    </location>
    <ligand>
        <name>Mg(2+)</name>
        <dbReference type="ChEBI" id="CHEBI:18420"/>
    </ligand>
</feature>
<feature type="binding site" description="in ADMIDAS binding site" evidence="3">
    <location>
        <position position="157"/>
    </location>
    <ligand>
        <name>Ca(2+)</name>
        <dbReference type="ChEBI" id="CHEBI:29108"/>
        <label>1</label>
    </ligand>
</feature>
<feature type="binding site" description="in ADMIDAS binding site" evidence="3">
    <location>
        <position position="158"/>
    </location>
    <ligand>
        <name>Ca(2+)</name>
        <dbReference type="ChEBI" id="CHEBI:29108"/>
        <label>1</label>
    </ligand>
</feature>
<feature type="binding site" description="in LIMBS binding site" evidence="3">
    <location>
        <position position="189"/>
    </location>
    <ligand>
        <name>Ca(2+)</name>
        <dbReference type="ChEBI" id="CHEBI:29108"/>
        <label>2</label>
    </ligand>
</feature>
<feature type="binding site" description="in LIMBS binding site" evidence="3">
    <location>
        <position position="244"/>
    </location>
    <ligand>
        <name>Ca(2+)</name>
        <dbReference type="ChEBI" id="CHEBI:29108"/>
        <label>2</label>
    </ligand>
</feature>
<feature type="binding site" description="in LIMBS binding site" evidence="3">
    <location>
        <position position="246"/>
    </location>
    <ligand>
        <name>Ca(2+)</name>
        <dbReference type="ChEBI" id="CHEBI:29108"/>
        <label>2</label>
    </ligand>
</feature>
<feature type="binding site" description="in LIMBS binding site" evidence="3">
    <location>
        <position position="248"/>
    </location>
    <ligand>
        <name>Ca(2+)</name>
        <dbReference type="ChEBI" id="CHEBI:29108"/>
        <label>2</label>
    </ligand>
</feature>
<feature type="binding site" description="in LIMBS binding site" evidence="3">
    <location>
        <position position="249"/>
    </location>
    <ligand>
        <name>Ca(2+)</name>
        <dbReference type="ChEBI" id="CHEBI:29108"/>
        <label>2</label>
    </ligand>
</feature>
<feature type="binding site" description="in MIDAS binding site" evidence="3">
    <location>
        <position position="249"/>
    </location>
    <ligand>
        <name>Mg(2+)</name>
        <dbReference type="ChEBI" id="CHEBI:18420"/>
    </ligand>
</feature>
<feature type="binding site" description="in ADMIDAS binding site" evidence="3">
    <location>
        <position position="362"/>
    </location>
    <ligand>
        <name>Ca(2+)</name>
        <dbReference type="ChEBI" id="CHEBI:29108"/>
        <label>1</label>
    </ligand>
</feature>
<feature type="modified residue" description="Phosphothreonine" evidence="3">
    <location>
        <position position="777"/>
    </location>
</feature>
<feature type="modified residue" description="Phosphotyrosine" evidence="3">
    <location>
        <position position="783"/>
    </location>
</feature>
<feature type="modified residue" description="Phosphoserine" evidence="3">
    <location>
        <position position="785"/>
    </location>
</feature>
<feature type="modified residue" description="Phosphothreonine" evidence="3">
    <location>
        <position position="789"/>
    </location>
</feature>
<feature type="modified residue" description="N6-acetyllysine; alternate" evidence="3">
    <location>
        <position position="794"/>
    </location>
</feature>
<feature type="glycosylation site" description="N-linked (GlcNAc...) asparagine" evidence="6">
    <location>
        <position position="94"/>
    </location>
</feature>
<feature type="glycosylation site" description="N-linked (GlcNAc...) asparagine" evidence="6">
    <location>
        <position position="97"/>
    </location>
</feature>
<feature type="glycosylation site" description="N-linked (GlcNAc...) asparagine" evidence="6">
    <location>
        <position position="212"/>
    </location>
</feature>
<feature type="glycosylation site" description="N-linked (GlcNAc...) asparagine" evidence="6">
    <location>
        <position position="269"/>
    </location>
</feature>
<feature type="glycosylation site" description="N-linked (GlcNAc...) asparagine" evidence="6">
    <location>
        <position position="406"/>
    </location>
</feature>
<feature type="glycosylation site" description="N-linked (GlcNAc...) asparagine" evidence="6">
    <location>
        <position position="417"/>
    </location>
</feature>
<feature type="glycosylation site" description="N-linked (GlcNAc...) asparagine" evidence="6">
    <location>
        <position position="481"/>
    </location>
</feature>
<feature type="glycosylation site" description="N-linked (GlcNAc...) asparagine" evidence="6">
    <location>
        <position position="520"/>
    </location>
</feature>
<feature type="glycosylation site" description="N-linked (GlcNAc...) asparagine" evidence="6">
    <location>
        <position position="584"/>
    </location>
</feature>
<feature type="glycosylation site" description="N-linked (GlcNAc...) asparagine" evidence="6">
    <location>
        <position position="669"/>
    </location>
</feature>
<feature type="disulfide bond" evidence="3">
    <location>
        <begin position="27"/>
        <end position="45"/>
    </location>
</feature>
<feature type="disulfide bond" evidence="3">
    <location>
        <begin position="35"/>
        <end position="464"/>
    </location>
</feature>
<feature type="disulfide bond" evidence="3">
    <location>
        <begin position="38"/>
        <end position="64"/>
    </location>
</feature>
<feature type="disulfide bond" evidence="3">
    <location>
        <begin position="48"/>
        <end position="75"/>
    </location>
</feature>
<feature type="disulfide bond" evidence="3">
    <location>
        <begin position="207"/>
        <end position="213"/>
    </location>
</feature>
<feature type="disulfide bond" evidence="3">
    <location>
        <begin position="261"/>
        <end position="301"/>
    </location>
</feature>
<feature type="disulfide bond" evidence="3">
    <location>
        <begin position="401"/>
        <end position="415"/>
    </location>
</feature>
<feature type="disulfide bond" evidence="3">
    <location>
        <begin position="435"/>
        <end position="462"/>
    </location>
</feature>
<feature type="disulfide bond" evidence="7">
    <location>
        <begin position="466"/>
        <end position="486"/>
    </location>
</feature>
<feature type="disulfide bond" evidence="7">
    <location>
        <begin position="477"/>
        <end position="489"/>
    </location>
</feature>
<feature type="disulfide bond" evidence="7">
    <location>
        <begin position="491"/>
        <end position="500"/>
    </location>
</feature>
<feature type="disulfide bond" evidence="7">
    <location>
        <begin position="502"/>
        <end position="533"/>
    </location>
</feature>
<feature type="disulfide bond" evidence="7">
    <location>
        <begin position="516"/>
        <end position="531"/>
    </location>
</feature>
<feature type="disulfide bond" evidence="7">
    <location>
        <begin position="525"/>
        <end position="536"/>
    </location>
</feature>
<feature type="disulfide bond" evidence="7">
    <location>
        <begin position="538"/>
        <end position="553"/>
    </location>
</feature>
<feature type="disulfide bond" evidence="7">
    <location>
        <begin position="555"/>
        <end position="576"/>
    </location>
</feature>
<feature type="disulfide bond" evidence="7">
    <location>
        <begin position="560"/>
        <end position="574"/>
    </location>
</feature>
<feature type="disulfide bond" evidence="7">
    <location>
        <begin position="568"/>
        <end position="579"/>
    </location>
</feature>
<feature type="disulfide bond" evidence="7">
    <location>
        <begin position="581"/>
        <end position="590"/>
    </location>
</feature>
<feature type="disulfide bond" evidence="7">
    <location>
        <begin position="592"/>
        <end position="615"/>
    </location>
</feature>
<feature type="disulfide bond" evidence="7">
    <location>
        <begin position="599"/>
        <end position="613"/>
    </location>
</feature>
<feature type="disulfide bond" evidence="7">
    <location>
        <begin position="607"/>
        <end position="618"/>
    </location>
</feature>
<feature type="disulfide bond" evidence="7">
    <location>
        <begin position="620"/>
        <end position="630"/>
    </location>
</feature>
<feature type="disulfide bond" evidence="3">
    <location>
        <begin position="633"/>
        <end position="636"/>
    </location>
</feature>
<feature type="disulfide bond" evidence="3">
    <location>
        <begin position="640"/>
        <end position="691"/>
    </location>
</feature>
<feature type="disulfide bond" evidence="3">
    <location>
        <begin position="646"/>
        <end position="665"/>
    </location>
</feature>
<feature type="disulfide bond" evidence="3">
    <location>
        <begin position="649"/>
        <end position="661"/>
    </location>
</feature>
<feature type="disulfide bond" evidence="3">
    <location>
        <begin position="699"/>
        <end position="723"/>
    </location>
</feature>
<feature type="cross-link" description="Glycyl lysine isopeptide (Lys-Gly) (interchain with G-Cter in SUMO1); alternate" evidence="3">
    <location>
        <position position="794"/>
    </location>
</feature>
<evidence type="ECO:0000250" key="1"/>
<evidence type="ECO:0000250" key="2">
    <source>
        <dbReference type="UniProtKB" id="P05106"/>
    </source>
</evidence>
<evidence type="ECO:0000250" key="3">
    <source>
        <dbReference type="UniProtKB" id="P05556"/>
    </source>
</evidence>
<evidence type="ECO:0000250" key="4">
    <source>
        <dbReference type="UniProtKB" id="P07228"/>
    </source>
</evidence>
<evidence type="ECO:0000250" key="5">
    <source>
        <dbReference type="UniProtKB" id="P09055"/>
    </source>
</evidence>
<evidence type="ECO:0000255" key="6"/>
<evidence type="ECO:0000255" key="7">
    <source>
        <dbReference type="PROSITE-ProRule" id="PRU01392"/>
    </source>
</evidence>
<evidence type="ECO:0000256" key="8">
    <source>
        <dbReference type="SAM" id="MobiDB-lite"/>
    </source>
</evidence>
<evidence type="ECO:0000312" key="9">
    <source>
        <dbReference type="EMBL" id="ABR08706.1"/>
    </source>
</evidence>
<protein>
    <recommendedName>
        <fullName evidence="9">Integrin beta-1</fullName>
    </recommendedName>
    <alternativeName>
        <fullName evidence="3">Fibronectin receptor subunit beta</fullName>
    </alternativeName>
    <alternativeName>
        <fullName>VLA-4 subunit beta</fullName>
    </alternativeName>
    <cdAntigenName evidence="3">CD29</cdAntigenName>
</protein>
<keyword id="KW-0007">Acetylation</keyword>
<keyword id="KW-0106">Calcium</keyword>
<keyword id="KW-0130">Cell adhesion</keyword>
<keyword id="KW-0965">Cell junction</keyword>
<keyword id="KW-1003">Cell membrane</keyword>
<keyword id="KW-0966">Cell projection</keyword>
<keyword id="KW-1015">Disulfide bond</keyword>
<keyword id="KW-0245">EGF-like domain</keyword>
<keyword id="KW-0967">Endosome</keyword>
<keyword id="KW-0325">Glycoprotein</keyword>
<keyword id="KW-0401">Integrin</keyword>
<keyword id="KW-1017">Isopeptide bond</keyword>
<keyword id="KW-0460">Magnesium</keyword>
<keyword id="KW-0472">Membrane</keyword>
<keyword id="KW-0479">Metal-binding</keyword>
<keyword id="KW-0517">Myogenesis</keyword>
<keyword id="KW-0597">Phosphoprotein</keyword>
<keyword id="KW-0675">Receptor</keyword>
<keyword id="KW-1185">Reference proteome</keyword>
<keyword id="KW-0677">Repeat</keyword>
<keyword id="KW-0732">Signal</keyword>
<keyword id="KW-0812">Transmembrane</keyword>
<keyword id="KW-1133">Transmembrane helix</keyword>
<keyword id="KW-0832">Ubl conjugation</keyword>
<dbReference type="EMBL" id="EF613219">
    <property type="protein sequence ID" value="ABR08706.1"/>
    <property type="molecule type" value="mRNA"/>
</dbReference>
<dbReference type="BMRB" id="A5Z1X6"/>
<dbReference type="SMR" id="A5Z1X6"/>
<dbReference type="GlyCosmos" id="A5Z1X6">
    <property type="glycosylation" value="10 sites, No reported glycans"/>
</dbReference>
<dbReference type="Proteomes" id="UP000694950">
    <property type="component" value="Unplaced"/>
</dbReference>
<dbReference type="GO" id="GO:0009986">
    <property type="term" value="C:cell surface"/>
    <property type="evidence" value="ECO:0000250"/>
    <property type="project" value="UniProtKB"/>
</dbReference>
<dbReference type="GO" id="GO:0005925">
    <property type="term" value="C:focal adhesion"/>
    <property type="evidence" value="ECO:0000250"/>
    <property type="project" value="UniProtKB"/>
</dbReference>
<dbReference type="GO" id="GO:0034679">
    <property type="term" value="C:integrin alpha9-beta1 complex"/>
    <property type="evidence" value="ECO:0000250"/>
    <property type="project" value="UniProtKB"/>
</dbReference>
<dbReference type="GO" id="GO:0030027">
    <property type="term" value="C:lamellipodium"/>
    <property type="evidence" value="ECO:0007669"/>
    <property type="project" value="UniProtKB-SubCell"/>
</dbReference>
<dbReference type="GO" id="GO:0042470">
    <property type="term" value="C:melanosome"/>
    <property type="evidence" value="ECO:0007669"/>
    <property type="project" value="UniProtKB-SubCell"/>
</dbReference>
<dbReference type="GO" id="GO:0016020">
    <property type="term" value="C:membrane"/>
    <property type="evidence" value="ECO:0000250"/>
    <property type="project" value="UniProtKB"/>
</dbReference>
<dbReference type="GO" id="GO:0055037">
    <property type="term" value="C:recycling endosome"/>
    <property type="evidence" value="ECO:0007669"/>
    <property type="project" value="UniProtKB-SubCell"/>
</dbReference>
<dbReference type="GO" id="GO:0032587">
    <property type="term" value="C:ruffle membrane"/>
    <property type="evidence" value="ECO:0007669"/>
    <property type="project" value="UniProtKB-SubCell"/>
</dbReference>
<dbReference type="GO" id="GO:0045202">
    <property type="term" value="C:synapse"/>
    <property type="evidence" value="ECO:0007669"/>
    <property type="project" value="TreeGrafter"/>
</dbReference>
<dbReference type="GO" id="GO:0019960">
    <property type="term" value="F:C-X3-C chemokine binding"/>
    <property type="evidence" value="ECO:0007669"/>
    <property type="project" value="TreeGrafter"/>
</dbReference>
<dbReference type="GO" id="GO:0098639">
    <property type="term" value="F:collagen binding involved in cell-matrix adhesion"/>
    <property type="evidence" value="ECO:0007669"/>
    <property type="project" value="TreeGrafter"/>
</dbReference>
<dbReference type="GO" id="GO:0001968">
    <property type="term" value="F:fibronectin binding"/>
    <property type="evidence" value="ECO:0007669"/>
    <property type="project" value="TreeGrafter"/>
</dbReference>
<dbReference type="GO" id="GO:0098640">
    <property type="term" value="F:integrin binding involved in cell-matrix adhesion"/>
    <property type="evidence" value="ECO:0000250"/>
    <property type="project" value="UniProtKB"/>
</dbReference>
<dbReference type="GO" id="GO:0043236">
    <property type="term" value="F:laminin binding"/>
    <property type="evidence" value="ECO:0007669"/>
    <property type="project" value="TreeGrafter"/>
</dbReference>
<dbReference type="GO" id="GO:0046872">
    <property type="term" value="F:metal ion binding"/>
    <property type="evidence" value="ECO:0007669"/>
    <property type="project" value="UniProtKB-KW"/>
</dbReference>
<dbReference type="GO" id="GO:0046982">
    <property type="term" value="F:protein heterodimerization activity"/>
    <property type="evidence" value="ECO:0000250"/>
    <property type="project" value="UniProtKB"/>
</dbReference>
<dbReference type="GO" id="GO:0019901">
    <property type="term" value="F:protein kinase binding"/>
    <property type="evidence" value="ECO:0007669"/>
    <property type="project" value="TreeGrafter"/>
</dbReference>
<dbReference type="GO" id="GO:0033627">
    <property type="term" value="P:cell adhesion mediated by integrin"/>
    <property type="evidence" value="ECO:0000250"/>
    <property type="project" value="UniProtKB"/>
</dbReference>
<dbReference type="GO" id="GO:0016477">
    <property type="term" value="P:cell migration"/>
    <property type="evidence" value="ECO:0007669"/>
    <property type="project" value="TreeGrafter"/>
</dbReference>
<dbReference type="GO" id="GO:0098609">
    <property type="term" value="P:cell-cell adhesion"/>
    <property type="evidence" value="ECO:0007669"/>
    <property type="project" value="TreeGrafter"/>
</dbReference>
<dbReference type="GO" id="GO:0071404">
    <property type="term" value="P:cellular response to low-density lipoprotein particle stimulus"/>
    <property type="evidence" value="ECO:0000250"/>
    <property type="project" value="UniProtKB"/>
</dbReference>
<dbReference type="GO" id="GO:0007229">
    <property type="term" value="P:integrin-mediated signaling pathway"/>
    <property type="evidence" value="ECO:0007669"/>
    <property type="project" value="UniProtKB-KW"/>
</dbReference>
<dbReference type="GO" id="GO:0007517">
    <property type="term" value="P:muscle organ development"/>
    <property type="evidence" value="ECO:0007669"/>
    <property type="project" value="UniProtKB-KW"/>
</dbReference>
<dbReference type="GO" id="GO:0045445">
    <property type="term" value="P:myoblast differentiation"/>
    <property type="evidence" value="ECO:0000250"/>
    <property type="project" value="UniProtKB"/>
</dbReference>
<dbReference type="GO" id="GO:0007520">
    <property type="term" value="P:myoblast fusion"/>
    <property type="evidence" value="ECO:0000250"/>
    <property type="project" value="UniProtKB"/>
</dbReference>
<dbReference type="GO" id="GO:0045906">
    <property type="term" value="P:negative regulation of vasoconstriction"/>
    <property type="evidence" value="ECO:0000250"/>
    <property type="project" value="UniProtKB"/>
</dbReference>
<dbReference type="GO" id="GO:0030335">
    <property type="term" value="P:positive regulation of cell migration"/>
    <property type="evidence" value="ECO:0000250"/>
    <property type="project" value="UniProtKB"/>
</dbReference>
<dbReference type="GO" id="GO:1903078">
    <property type="term" value="P:positive regulation of protein localization to plasma membrane"/>
    <property type="evidence" value="ECO:0000250"/>
    <property type="project" value="UniProtKB"/>
</dbReference>
<dbReference type="GO" id="GO:0031623">
    <property type="term" value="P:receptor internalization"/>
    <property type="evidence" value="ECO:0000250"/>
    <property type="project" value="UniProtKB"/>
</dbReference>
<dbReference type="GO" id="GO:0010710">
    <property type="term" value="P:regulation of collagen catabolic process"/>
    <property type="evidence" value="ECO:0000250"/>
    <property type="project" value="UniProtKB"/>
</dbReference>
<dbReference type="FunFam" id="1.20.5.100:FF:000002">
    <property type="entry name" value="Integrin beta"/>
    <property type="match status" value="1"/>
</dbReference>
<dbReference type="FunFam" id="2.10.25.10:FF:000043">
    <property type="entry name" value="Integrin beta"/>
    <property type="match status" value="1"/>
</dbReference>
<dbReference type="FunFam" id="2.10.25.10:FF:000075">
    <property type="entry name" value="Integrin beta"/>
    <property type="match status" value="1"/>
</dbReference>
<dbReference type="FunFam" id="2.10.25.10:FF:000155">
    <property type="entry name" value="Integrin beta"/>
    <property type="match status" value="1"/>
</dbReference>
<dbReference type="FunFam" id="2.60.40.1510:FF:000003">
    <property type="entry name" value="Integrin beta"/>
    <property type="match status" value="1"/>
</dbReference>
<dbReference type="FunFam" id="3.30.1680.10:FF:000005">
    <property type="entry name" value="Integrin beta"/>
    <property type="match status" value="1"/>
</dbReference>
<dbReference type="FunFam" id="3.40.50.410:FF:000002">
    <property type="entry name" value="Integrin beta"/>
    <property type="match status" value="1"/>
</dbReference>
<dbReference type="FunFam" id="4.10.1240.30:FF:000002">
    <property type="entry name" value="Integrin beta"/>
    <property type="match status" value="1"/>
</dbReference>
<dbReference type="Gene3D" id="4.10.1240.30">
    <property type="match status" value="1"/>
</dbReference>
<dbReference type="Gene3D" id="1.20.5.100">
    <property type="entry name" value="Cytochrome c1, transmembrane anchor, C-terminal"/>
    <property type="match status" value="1"/>
</dbReference>
<dbReference type="Gene3D" id="2.10.25.10">
    <property type="entry name" value="Laminin"/>
    <property type="match status" value="4"/>
</dbReference>
<dbReference type="Gene3D" id="3.30.1680.10">
    <property type="entry name" value="ligand-binding face of the semaphorins, domain 2"/>
    <property type="match status" value="1"/>
</dbReference>
<dbReference type="Gene3D" id="2.60.40.1510">
    <property type="entry name" value="ntegrin, alpha v. Chain A, domain 3"/>
    <property type="match status" value="1"/>
</dbReference>
<dbReference type="Gene3D" id="3.40.50.410">
    <property type="entry name" value="von Willebrand factor, type A domain"/>
    <property type="match status" value="1"/>
</dbReference>
<dbReference type="InterPro" id="IPR013111">
    <property type="entry name" value="EGF_extracell"/>
</dbReference>
<dbReference type="InterPro" id="IPR040622">
    <property type="entry name" value="I-EGF_1"/>
</dbReference>
<dbReference type="InterPro" id="IPR033760">
    <property type="entry name" value="Integrin_beta_N"/>
</dbReference>
<dbReference type="InterPro" id="IPR015812">
    <property type="entry name" value="Integrin_bsu"/>
</dbReference>
<dbReference type="InterPro" id="IPR014836">
    <property type="entry name" value="Integrin_bsu_cyt_dom"/>
</dbReference>
<dbReference type="InterPro" id="IPR012896">
    <property type="entry name" value="Integrin_bsu_tail"/>
</dbReference>
<dbReference type="InterPro" id="IPR036349">
    <property type="entry name" value="Integrin_bsu_tail_dom_sf"/>
</dbReference>
<dbReference type="InterPro" id="IPR002369">
    <property type="entry name" value="Integrin_bsu_VWA"/>
</dbReference>
<dbReference type="InterPro" id="IPR032695">
    <property type="entry name" value="Integrin_dom_sf"/>
</dbReference>
<dbReference type="InterPro" id="IPR016201">
    <property type="entry name" value="PSI"/>
</dbReference>
<dbReference type="InterPro" id="IPR036465">
    <property type="entry name" value="vWFA_dom_sf"/>
</dbReference>
<dbReference type="PANTHER" id="PTHR10082">
    <property type="entry name" value="INTEGRIN BETA SUBUNIT"/>
    <property type="match status" value="1"/>
</dbReference>
<dbReference type="PANTHER" id="PTHR10082:SF28">
    <property type="entry name" value="INTEGRIN BETA-1"/>
    <property type="match status" value="1"/>
</dbReference>
<dbReference type="Pfam" id="PF07974">
    <property type="entry name" value="EGF_2"/>
    <property type="match status" value="1"/>
</dbReference>
<dbReference type="Pfam" id="PF23105">
    <property type="entry name" value="EGF_integrin"/>
    <property type="match status" value="1"/>
</dbReference>
<dbReference type="Pfam" id="PF18372">
    <property type="entry name" value="I-EGF_1"/>
    <property type="match status" value="1"/>
</dbReference>
<dbReference type="Pfam" id="PF08725">
    <property type="entry name" value="Integrin_b_cyt"/>
    <property type="match status" value="1"/>
</dbReference>
<dbReference type="Pfam" id="PF07965">
    <property type="entry name" value="Integrin_B_tail"/>
    <property type="match status" value="1"/>
</dbReference>
<dbReference type="Pfam" id="PF00362">
    <property type="entry name" value="Integrin_beta"/>
    <property type="match status" value="1"/>
</dbReference>
<dbReference type="Pfam" id="PF17205">
    <property type="entry name" value="PSI_integrin"/>
    <property type="match status" value="1"/>
</dbReference>
<dbReference type="PIRSF" id="PIRSF002512">
    <property type="entry name" value="Integrin_B"/>
    <property type="match status" value="1"/>
</dbReference>
<dbReference type="PRINTS" id="PR01186">
    <property type="entry name" value="INTEGRINB"/>
</dbReference>
<dbReference type="SMART" id="SM00187">
    <property type="entry name" value="INB"/>
    <property type="match status" value="1"/>
</dbReference>
<dbReference type="SMART" id="SM01241">
    <property type="entry name" value="Integrin_b_cyt"/>
    <property type="match status" value="1"/>
</dbReference>
<dbReference type="SMART" id="SM01242">
    <property type="entry name" value="Integrin_B_tail"/>
    <property type="match status" value="1"/>
</dbReference>
<dbReference type="SMART" id="SM00423">
    <property type="entry name" value="PSI"/>
    <property type="match status" value="1"/>
</dbReference>
<dbReference type="SUPFAM" id="SSF57196">
    <property type="entry name" value="EGF/Laminin"/>
    <property type="match status" value="2"/>
</dbReference>
<dbReference type="SUPFAM" id="SSF69687">
    <property type="entry name" value="Integrin beta tail domain"/>
    <property type="match status" value="1"/>
</dbReference>
<dbReference type="SUPFAM" id="SSF69179">
    <property type="entry name" value="Integrin domains"/>
    <property type="match status" value="1"/>
</dbReference>
<dbReference type="SUPFAM" id="SSF103575">
    <property type="entry name" value="Plexin repeat"/>
    <property type="match status" value="1"/>
</dbReference>
<dbReference type="SUPFAM" id="SSF53300">
    <property type="entry name" value="vWA-like"/>
    <property type="match status" value="1"/>
</dbReference>
<dbReference type="PROSITE" id="PS00022">
    <property type="entry name" value="EGF_1"/>
    <property type="match status" value="2"/>
</dbReference>
<dbReference type="PROSITE" id="PS00243">
    <property type="entry name" value="I_EGF_1"/>
    <property type="match status" value="3"/>
</dbReference>
<dbReference type="PROSITE" id="PS52047">
    <property type="entry name" value="I_EGF_2"/>
    <property type="match status" value="4"/>
</dbReference>
<proteinExistence type="evidence at transcript level"/>
<accession>A5Z1X6</accession>